<accession>B7MSJ5</accession>
<feature type="chain" id="PRO_1000194758" description="Adenylosuccinate synthetase">
    <location>
        <begin position="1"/>
        <end position="432"/>
    </location>
</feature>
<feature type="active site" description="Proton acceptor" evidence="1">
    <location>
        <position position="14"/>
    </location>
</feature>
<feature type="active site" description="Proton donor" evidence="1">
    <location>
        <position position="42"/>
    </location>
</feature>
<feature type="binding site" evidence="1">
    <location>
        <begin position="13"/>
        <end position="19"/>
    </location>
    <ligand>
        <name>GTP</name>
        <dbReference type="ChEBI" id="CHEBI:37565"/>
    </ligand>
</feature>
<feature type="binding site" description="in other chain" evidence="1">
    <location>
        <begin position="14"/>
        <end position="17"/>
    </location>
    <ligand>
        <name>IMP</name>
        <dbReference type="ChEBI" id="CHEBI:58053"/>
        <note>ligand shared between dimeric partners</note>
    </ligand>
</feature>
<feature type="binding site" evidence="1">
    <location>
        <position position="14"/>
    </location>
    <ligand>
        <name>Mg(2+)</name>
        <dbReference type="ChEBI" id="CHEBI:18420"/>
    </ligand>
</feature>
<feature type="binding site" description="in other chain" evidence="1">
    <location>
        <begin position="39"/>
        <end position="42"/>
    </location>
    <ligand>
        <name>IMP</name>
        <dbReference type="ChEBI" id="CHEBI:58053"/>
        <note>ligand shared between dimeric partners</note>
    </ligand>
</feature>
<feature type="binding site" evidence="1">
    <location>
        <begin position="41"/>
        <end position="43"/>
    </location>
    <ligand>
        <name>GTP</name>
        <dbReference type="ChEBI" id="CHEBI:37565"/>
    </ligand>
</feature>
<feature type="binding site" evidence="1">
    <location>
        <position position="41"/>
    </location>
    <ligand>
        <name>Mg(2+)</name>
        <dbReference type="ChEBI" id="CHEBI:18420"/>
    </ligand>
</feature>
<feature type="binding site" description="in other chain" evidence="1">
    <location>
        <position position="130"/>
    </location>
    <ligand>
        <name>IMP</name>
        <dbReference type="ChEBI" id="CHEBI:58053"/>
        <note>ligand shared between dimeric partners</note>
    </ligand>
</feature>
<feature type="binding site" evidence="1">
    <location>
        <position position="144"/>
    </location>
    <ligand>
        <name>IMP</name>
        <dbReference type="ChEBI" id="CHEBI:58053"/>
        <note>ligand shared between dimeric partners</note>
    </ligand>
</feature>
<feature type="binding site" description="in other chain" evidence="1">
    <location>
        <position position="225"/>
    </location>
    <ligand>
        <name>IMP</name>
        <dbReference type="ChEBI" id="CHEBI:58053"/>
        <note>ligand shared between dimeric partners</note>
    </ligand>
</feature>
<feature type="binding site" description="in other chain" evidence="1">
    <location>
        <position position="240"/>
    </location>
    <ligand>
        <name>IMP</name>
        <dbReference type="ChEBI" id="CHEBI:58053"/>
        <note>ligand shared between dimeric partners</note>
    </ligand>
</feature>
<feature type="binding site" evidence="1">
    <location>
        <begin position="300"/>
        <end position="306"/>
    </location>
    <ligand>
        <name>substrate</name>
    </ligand>
</feature>
<feature type="binding site" description="in other chain" evidence="1">
    <location>
        <position position="304"/>
    </location>
    <ligand>
        <name>IMP</name>
        <dbReference type="ChEBI" id="CHEBI:58053"/>
        <note>ligand shared between dimeric partners</note>
    </ligand>
</feature>
<feature type="binding site" evidence="1">
    <location>
        <position position="306"/>
    </location>
    <ligand>
        <name>GTP</name>
        <dbReference type="ChEBI" id="CHEBI:37565"/>
    </ligand>
</feature>
<feature type="binding site" evidence="1">
    <location>
        <begin position="332"/>
        <end position="334"/>
    </location>
    <ligand>
        <name>GTP</name>
        <dbReference type="ChEBI" id="CHEBI:37565"/>
    </ligand>
</feature>
<feature type="binding site" evidence="1">
    <location>
        <begin position="415"/>
        <end position="417"/>
    </location>
    <ligand>
        <name>GTP</name>
        <dbReference type="ChEBI" id="CHEBI:37565"/>
    </ligand>
</feature>
<organism>
    <name type="scientific">Escherichia coli O81 (strain ED1a)</name>
    <dbReference type="NCBI Taxonomy" id="585397"/>
    <lineage>
        <taxon>Bacteria</taxon>
        <taxon>Pseudomonadati</taxon>
        <taxon>Pseudomonadota</taxon>
        <taxon>Gammaproteobacteria</taxon>
        <taxon>Enterobacterales</taxon>
        <taxon>Enterobacteriaceae</taxon>
        <taxon>Escherichia</taxon>
    </lineage>
</organism>
<proteinExistence type="inferred from homology"/>
<reference key="1">
    <citation type="journal article" date="2009" name="PLoS Genet.">
        <title>Organised genome dynamics in the Escherichia coli species results in highly diverse adaptive paths.</title>
        <authorList>
            <person name="Touchon M."/>
            <person name="Hoede C."/>
            <person name="Tenaillon O."/>
            <person name="Barbe V."/>
            <person name="Baeriswyl S."/>
            <person name="Bidet P."/>
            <person name="Bingen E."/>
            <person name="Bonacorsi S."/>
            <person name="Bouchier C."/>
            <person name="Bouvet O."/>
            <person name="Calteau A."/>
            <person name="Chiapello H."/>
            <person name="Clermont O."/>
            <person name="Cruveiller S."/>
            <person name="Danchin A."/>
            <person name="Diard M."/>
            <person name="Dossat C."/>
            <person name="Karoui M.E."/>
            <person name="Frapy E."/>
            <person name="Garry L."/>
            <person name="Ghigo J.M."/>
            <person name="Gilles A.M."/>
            <person name="Johnson J."/>
            <person name="Le Bouguenec C."/>
            <person name="Lescat M."/>
            <person name="Mangenot S."/>
            <person name="Martinez-Jehanne V."/>
            <person name="Matic I."/>
            <person name="Nassif X."/>
            <person name="Oztas S."/>
            <person name="Petit M.A."/>
            <person name="Pichon C."/>
            <person name="Rouy Z."/>
            <person name="Ruf C.S."/>
            <person name="Schneider D."/>
            <person name="Tourret J."/>
            <person name="Vacherie B."/>
            <person name="Vallenet D."/>
            <person name="Medigue C."/>
            <person name="Rocha E.P.C."/>
            <person name="Denamur E."/>
        </authorList>
    </citation>
    <scope>NUCLEOTIDE SEQUENCE [LARGE SCALE GENOMIC DNA]</scope>
    <source>
        <strain>ED1a</strain>
    </source>
</reference>
<sequence>MGNNVVVLGTQWGDEGKGKIVDLLTERAKYVVRYQGGHNAGHTLVINGEKTVLHLIPSGILRENVTSIIGNGVVLSPAALMKEMKELEDRGIPVRERLLLSEACPLILDYHVALDNAREKARGAKAIGTTGRGIGPAYEDKVARRGLRVGDLFDKETFAEKLKEVMEYHNFQLVNYYKAEAVDYQKVLDDTMAVADILTSMVVDVSDLLDQARQRGDFVMFEGAQGTLLDIDHGTYPYVTSSNTTAGGVATGSGLGPRYVDYVLGILKAYSTRVGAGPFPTELFDETGEFLCKQGNEFGATTGRRRRTGWLDTVAVRRAVQLNSLSGFCLTKLDVLDGLKEVKLCVAYRMPDGREVTTTPLAADDWKGVEPIYETMPGWSESTFGVKDRSGLPQAALNYIKRIEELTGVPIDIISTGPDRTETMILRDPFDA</sequence>
<dbReference type="EC" id="6.3.4.4" evidence="1"/>
<dbReference type="EMBL" id="CU928162">
    <property type="protein sequence ID" value="CAR10920.1"/>
    <property type="molecule type" value="Genomic_DNA"/>
</dbReference>
<dbReference type="RefSeq" id="WP_000527955.1">
    <property type="nucleotide sequence ID" value="NC_011745.1"/>
</dbReference>
<dbReference type="SMR" id="B7MSJ5"/>
<dbReference type="GeneID" id="75202411"/>
<dbReference type="KEGG" id="ecq:ECED1_4962"/>
<dbReference type="HOGENOM" id="CLU_029848_0_0_6"/>
<dbReference type="UniPathway" id="UPA00075">
    <property type="reaction ID" value="UER00335"/>
</dbReference>
<dbReference type="Proteomes" id="UP000000748">
    <property type="component" value="Chromosome"/>
</dbReference>
<dbReference type="GO" id="GO:0005737">
    <property type="term" value="C:cytoplasm"/>
    <property type="evidence" value="ECO:0007669"/>
    <property type="project" value="UniProtKB-SubCell"/>
</dbReference>
<dbReference type="GO" id="GO:0004019">
    <property type="term" value="F:adenylosuccinate synthase activity"/>
    <property type="evidence" value="ECO:0007669"/>
    <property type="project" value="UniProtKB-UniRule"/>
</dbReference>
<dbReference type="GO" id="GO:0005525">
    <property type="term" value="F:GTP binding"/>
    <property type="evidence" value="ECO:0007669"/>
    <property type="project" value="UniProtKB-UniRule"/>
</dbReference>
<dbReference type="GO" id="GO:0000287">
    <property type="term" value="F:magnesium ion binding"/>
    <property type="evidence" value="ECO:0007669"/>
    <property type="project" value="UniProtKB-UniRule"/>
</dbReference>
<dbReference type="GO" id="GO:0044208">
    <property type="term" value="P:'de novo' AMP biosynthetic process"/>
    <property type="evidence" value="ECO:0007669"/>
    <property type="project" value="UniProtKB-UniRule"/>
</dbReference>
<dbReference type="GO" id="GO:0046040">
    <property type="term" value="P:IMP metabolic process"/>
    <property type="evidence" value="ECO:0007669"/>
    <property type="project" value="TreeGrafter"/>
</dbReference>
<dbReference type="CDD" id="cd03108">
    <property type="entry name" value="AdSS"/>
    <property type="match status" value="1"/>
</dbReference>
<dbReference type="FunFam" id="1.10.300.10:FF:000001">
    <property type="entry name" value="Adenylosuccinate synthetase"/>
    <property type="match status" value="1"/>
</dbReference>
<dbReference type="FunFam" id="3.90.170.10:FF:000001">
    <property type="entry name" value="Adenylosuccinate synthetase"/>
    <property type="match status" value="1"/>
</dbReference>
<dbReference type="Gene3D" id="3.40.440.10">
    <property type="entry name" value="Adenylosuccinate Synthetase, subunit A, domain 1"/>
    <property type="match status" value="1"/>
</dbReference>
<dbReference type="Gene3D" id="1.10.300.10">
    <property type="entry name" value="Adenylosuccinate Synthetase, subunit A, domain 2"/>
    <property type="match status" value="1"/>
</dbReference>
<dbReference type="Gene3D" id="3.90.170.10">
    <property type="entry name" value="Adenylosuccinate Synthetase, subunit A, domain 3"/>
    <property type="match status" value="1"/>
</dbReference>
<dbReference type="HAMAP" id="MF_00011">
    <property type="entry name" value="Adenylosucc_synth"/>
    <property type="match status" value="1"/>
</dbReference>
<dbReference type="InterPro" id="IPR018220">
    <property type="entry name" value="Adenylosuccin_syn_GTP-bd"/>
</dbReference>
<dbReference type="InterPro" id="IPR033128">
    <property type="entry name" value="Adenylosuccin_syn_Lys_AS"/>
</dbReference>
<dbReference type="InterPro" id="IPR042109">
    <property type="entry name" value="Adenylosuccinate_synth_dom1"/>
</dbReference>
<dbReference type="InterPro" id="IPR042110">
    <property type="entry name" value="Adenylosuccinate_synth_dom2"/>
</dbReference>
<dbReference type="InterPro" id="IPR042111">
    <property type="entry name" value="Adenylosuccinate_synth_dom3"/>
</dbReference>
<dbReference type="InterPro" id="IPR001114">
    <property type="entry name" value="Adenylosuccinate_synthetase"/>
</dbReference>
<dbReference type="InterPro" id="IPR027417">
    <property type="entry name" value="P-loop_NTPase"/>
</dbReference>
<dbReference type="NCBIfam" id="NF002223">
    <property type="entry name" value="PRK01117.1"/>
    <property type="match status" value="1"/>
</dbReference>
<dbReference type="NCBIfam" id="TIGR00184">
    <property type="entry name" value="purA"/>
    <property type="match status" value="1"/>
</dbReference>
<dbReference type="PANTHER" id="PTHR11846">
    <property type="entry name" value="ADENYLOSUCCINATE SYNTHETASE"/>
    <property type="match status" value="1"/>
</dbReference>
<dbReference type="PANTHER" id="PTHR11846:SF0">
    <property type="entry name" value="ADENYLOSUCCINATE SYNTHETASE"/>
    <property type="match status" value="1"/>
</dbReference>
<dbReference type="Pfam" id="PF00709">
    <property type="entry name" value="Adenylsucc_synt"/>
    <property type="match status" value="1"/>
</dbReference>
<dbReference type="SMART" id="SM00788">
    <property type="entry name" value="Adenylsucc_synt"/>
    <property type="match status" value="1"/>
</dbReference>
<dbReference type="SUPFAM" id="SSF52540">
    <property type="entry name" value="P-loop containing nucleoside triphosphate hydrolases"/>
    <property type="match status" value="1"/>
</dbReference>
<dbReference type="PROSITE" id="PS01266">
    <property type="entry name" value="ADENYLOSUCCIN_SYN_1"/>
    <property type="match status" value="1"/>
</dbReference>
<dbReference type="PROSITE" id="PS00513">
    <property type="entry name" value="ADENYLOSUCCIN_SYN_2"/>
    <property type="match status" value="1"/>
</dbReference>
<gene>
    <name evidence="1" type="primary">purA</name>
    <name type="ordered locus">ECED1_4962</name>
</gene>
<name>PURA_ECO81</name>
<evidence type="ECO:0000255" key="1">
    <source>
        <dbReference type="HAMAP-Rule" id="MF_00011"/>
    </source>
</evidence>
<protein>
    <recommendedName>
        <fullName evidence="1">Adenylosuccinate synthetase</fullName>
        <shortName evidence="1">AMPSase</shortName>
        <shortName evidence="1">AdSS</shortName>
        <ecNumber evidence="1">6.3.4.4</ecNumber>
    </recommendedName>
    <alternativeName>
        <fullName evidence="1">IMP--aspartate ligase</fullName>
    </alternativeName>
</protein>
<keyword id="KW-0963">Cytoplasm</keyword>
<keyword id="KW-0342">GTP-binding</keyword>
<keyword id="KW-0436">Ligase</keyword>
<keyword id="KW-0460">Magnesium</keyword>
<keyword id="KW-0479">Metal-binding</keyword>
<keyword id="KW-0547">Nucleotide-binding</keyword>
<keyword id="KW-0658">Purine biosynthesis</keyword>
<comment type="function">
    <text evidence="1">Plays an important role in the de novo pathway of purine nucleotide biosynthesis. Catalyzes the first committed step in the biosynthesis of AMP from IMP.</text>
</comment>
<comment type="catalytic activity">
    <reaction evidence="1">
        <text>IMP + L-aspartate + GTP = N(6)-(1,2-dicarboxyethyl)-AMP + GDP + phosphate + 2 H(+)</text>
        <dbReference type="Rhea" id="RHEA:15753"/>
        <dbReference type="ChEBI" id="CHEBI:15378"/>
        <dbReference type="ChEBI" id="CHEBI:29991"/>
        <dbReference type="ChEBI" id="CHEBI:37565"/>
        <dbReference type="ChEBI" id="CHEBI:43474"/>
        <dbReference type="ChEBI" id="CHEBI:57567"/>
        <dbReference type="ChEBI" id="CHEBI:58053"/>
        <dbReference type="ChEBI" id="CHEBI:58189"/>
        <dbReference type="EC" id="6.3.4.4"/>
    </reaction>
</comment>
<comment type="cofactor">
    <cofactor evidence="1">
        <name>Mg(2+)</name>
        <dbReference type="ChEBI" id="CHEBI:18420"/>
    </cofactor>
    <text evidence="1">Binds 1 Mg(2+) ion per subunit.</text>
</comment>
<comment type="pathway">
    <text evidence="1">Purine metabolism; AMP biosynthesis via de novo pathway; AMP from IMP: step 1/2.</text>
</comment>
<comment type="subunit">
    <text evidence="1">Homodimer.</text>
</comment>
<comment type="subcellular location">
    <subcellularLocation>
        <location evidence="1">Cytoplasm</location>
    </subcellularLocation>
</comment>
<comment type="similarity">
    <text evidence="1">Belongs to the adenylosuccinate synthetase family.</text>
</comment>